<comment type="function">
    <text evidence="1">Located on the platform of the 30S subunit.</text>
</comment>
<comment type="subunit">
    <text evidence="1">Part of the 30S ribosomal subunit.</text>
</comment>
<comment type="similarity">
    <text evidence="1">Belongs to the universal ribosomal protein uS11 family.</text>
</comment>
<feature type="chain" id="PRO_0000123282" description="Small ribosomal subunit protein uS11">
    <location>
        <begin position="1"/>
        <end position="132"/>
    </location>
</feature>
<feature type="sequence conflict" description="In Ref. 1; CAA56479." evidence="2" ref="1">
    <original>SK</original>
    <variation>FQ</variation>
    <location>
        <begin position="86"/>
        <end position="87"/>
    </location>
</feature>
<dbReference type="EMBL" id="X80194">
    <property type="protein sequence ID" value="CAA56479.1"/>
    <property type="molecule type" value="Genomic_DNA"/>
</dbReference>
<dbReference type="EMBL" id="CP000077">
    <property type="protein sequence ID" value="AAY79509.1"/>
    <property type="molecule type" value="Genomic_DNA"/>
</dbReference>
<dbReference type="PIR" id="S47022">
    <property type="entry name" value="S47022"/>
</dbReference>
<dbReference type="RefSeq" id="WP_011277010.1">
    <property type="nucleotide sequence ID" value="NC_007181.1"/>
</dbReference>
<dbReference type="PDB" id="8HKX">
    <property type="method" value="EM"/>
    <property type="resolution" value="3.14 A"/>
    <property type="chains" value="S11P=5-132"/>
</dbReference>
<dbReference type="PDB" id="8HKY">
    <property type="method" value="EM"/>
    <property type="resolution" value="4.45 A"/>
    <property type="chains" value="S11P=5-132"/>
</dbReference>
<dbReference type="PDB" id="8HKZ">
    <property type="method" value="EM"/>
    <property type="resolution" value="4.78 A"/>
    <property type="chains" value="S11P=5-132"/>
</dbReference>
<dbReference type="PDB" id="8HL1">
    <property type="method" value="EM"/>
    <property type="resolution" value="3.93 A"/>
    <property type="chains" value="S11P=5-132"/>
</dbReference>
<dbReference type="PDB" id="8HL2">
    <property type="method" value="EM"/>
    <property type="resolution" value="4.10 A"/>
    <property type="chains" value="S11P=5-132"/>
</dbReference>
<dbReference type="PDB" id="8HL3">
    <property type="method" value="EM"/>
    <property type="resolution" value="4.80 A"/>
    <property type="chains" value="S11P=5-132"/>
</dbReference>
<dbReference type="PDB" id="8HL4">
    <property type="method" value="EM"/>
    <property type="resolution" value="4.62 A"/>
    <property type="chains" value="S11P=5-132"/>
</dbReference>
<dbReference type="PDB" id="8HL5">
    <property type="method" value="EM"/>
    <property type="resolution" value="5.72 A"/>
    <property type="chains" value="S11P=5-132"/>
</dbReference>
<dbReference type="PDB" id="8WKP">
    <property type="method" value="EM"/>
    <property type="resolution" value="4.62 A"/>
    <property type="chains" value="S11P=5-132"/>
</dbReference>
<dbReference type="PDB" id="8WQ2">
    <property type="method" value="EM"/>
    <property type="resolution" value="4.10 A"/>
    <property type="chains" value="S11P=5-132"/>
</dbReference>
<dbReference type="PDB" id="8WQ4">
    <property type="method" value="EM"/>
    <property type="resolution" value="4.53 A"/>
    <property type="chains" value="S11P=5-132"/>
</dbReference>
<dbReference type="PDBsum" id="8HKX"/>
<dbReference type="PDBsum" id="8HKY"/>
<dbReference type="PDBsum" id="8HKZ"/>
<dbReference type="PDBsum" id="8HL1"/>
<dbReference type="PDBsum" id="8HL2"/>
<dbReference type="PDBsum" id="8HL3"/>
<dbReference type="PDBsum" id="8HL4"/>
<dbReference type="PDBsum" id="8HL5"/>
<dbReference type="PDBsum" id="8WKP"/>
<dbReference type="PDBsum" id="8WQ2"/>
<dbReference type="PDBsum" id="8WQ4"/>
<dbReference type="EMDB" id="EMD-34862"/>
<dbReference type="EMDB" id="EMD-34863"/>
<dbReference type="EMDB" id="EMD-34864"/>
<dbReference type="EMDB" id="EMD-34866"/>
<dbReference type="EMDB" id="EMD-34867"/>
<dbReference type="EMDB" id="EMD-34868"/>
<dbReference type="EMDB" id="EMD-34869"/>
<dbReference type="EMDB" id="EMD-34870"/>
<dbReference type="EMDB" id="EMD-37604"/>
<dbReference type="EMDB" id="EMD-37733"/>
<dbReference type="EMDB" id="EMD-37734"/>
<dbReference type="SMR" id="P39469"/>
<dbReference type="STRING" id="330779.Saci_0082"/>
<dbReference type="GeneID" id="14550612"/>
<dbReference type="KEGG" id="sai:Saci_0082"/>
<dbReference type="PATRIC" id="fig|330779.12.peg.76"/>
<dbReference type="eggNOG" id="arCOG04240">
    <property type="taxonomic scope" value="Archaea"/>
</dbReference>
<dbReference type="HOGENOM" id="CLU_072439_6_1_2"/>
<dbReference type="Proteomes" id="UP000001018">
    <property type="component" value="Chromosome"/>
</dbReference>
<dbReference type="GO" id="GO:1990904">
    <property type="term" value="C:ribonucleoprotein complex"/>
    <property type="evidence" value="ECO:0007669"/>
    <property type="project" value="UniProtKB-KW"/>
</dbReference>
<dbReference type="GO" id="GO:0005840">
    <property type="term" value="C:ribosome"/>
    <property type="evidence" value="ECO:0007669"/>
    <property type="project" value="UniProtKB-KW"/>
</dbReference>
<dbReference type="GO" id="GO:0019843">
    <property type="term" value="F:rRNA binding"/>
    <property type="evidence" value="ECO:0007669"/>
    <property type="project" value="UniProtKB-UniRule"/>
</dbReference>
<dbReference type="GO" id="GO:0003735">
    <property type="term" value="F:structural constituent of ribosome"/>
    <property type="evidence" value="ECO:0007669"/>
    <property type="project" value="InterPro"/>
</dbReference>
<dbReference type="GO" id="GO:0006412">
    <property type="term" value="P:translation"/>
    <property type="evidence" value="ECO:0007669"/>
    <property type="project" value="UniProtKB-UniRule"/>
</dbReference>
<dbReference type="FunFam" id="3.30.420.80:FF:000007">
    <property type="entry name" value="30S ribosomal protein S11"/>
    <property type="match status" value="1"/>
</dbReference>
<dbReference type="Gene3D" id="3.30.420.80">
    <property type="entry name" value="Ribosomal protein S11"/>
    <property type="match status" value="1"/>
</dbReference>
<dbReference type="HAMAP" id="MF_01310">
    <property type="entry name" value="Ribosomal_uS11"/>
    <property type="match status" value="1"/>
</dbReference>
<dbReference type="InterPro" id="IPR001971">
    <property type="entry name" value="Ribosomal_uS11"/>
</dbReference>
<dbReference type="InterPro" id="IPR019961">
    <property type="entry name" value="Ribosomal_uS11_archaeal"/>
</dbReference>
<dbReference type="InterPro" id="IPR018102">
    <property type="entry name" value="Ribosomal_uS11_CS"/>
</dbReference>
<dbReference type="InterPro" id="IPR036967">
    <property type="entry name" value="Ribosomal_uS11_sf"/>
</dbReference>
<dbReference type="NCBIfam" id="TIGR03628">
    <property type="entry name" value="arch_S11P"/>
    <property type="match status" value="1"/>
</dbReference>
<dbReference type="NCBIfam" id="NF007176">
    <property type="entry name" value="PRK09607.1"/>
    <property type="match status" value="1"/>
</dbReference>
<dbReference type="PANTHER" id="PTHR11759">
    <property type="entry name" value="40S RIBOSOMAL PROTEIN S14/30S RIBOSOMAL PROTEIN S11"/>
    <property type="match status" value="1"/>
</dbReference>
<dbReference type="Pfam" id="PF00411">
    <property type="entry name" value="Ribosomal_S11"/>
    <property type="match status" value="1"/>
</dbReference>
<dbReference type="PIRSF" id="PIRSF002131">
    <property type="entry name" value="Ribosomal_S11"/>
    <property type="match status" value="1"/>
</dbReference>
<dbReference type="SUPFAM" id="SSF53137">
    <property type="entry name" value="Translational machinery components"/>
    <property type="match status" value="1"/>
</dbReference>
<dbReference type="PROSITE" id="PS00054">
    <property type="entry name" value="RIBOSOMAL_S11"/>
    <property type="match status" value="1"/>
</dbReference>
<accession>P39469</accession>
<accession>Q4JCH0</accession>
<name>RS11_SULAC</name>
<proteinExistence type="evidence at protein level"/>
<keyword id="KW-0002">3D-structure</keyword>
<keyword id="KW-1185">Reference proteome</keyword>
<keyword id="KW-0687">Ribonucleoprotein</keyword>
<keyword id="KW-0689">Ribosomal protein</keyword>
<keyword id="KW-0694">RNA-binding</keyword>
<keyword id="KW-0699">rRNA-binding</keyword>
<organism>
    <name type="scientific">Sulfolobus acidocaldarius (strain ATCC 33909 / DSM 639 / JCM 8929 / NBRC 15157 / NCIMB 11770)</name>
    <dbReference type="NCBI Taxonomy" id="330779"/>
    <lineage>
        <taxon>Archaea</taxon>
        <taxon>Thermoproteota</taxon>
        <taxon>Thermoprotei</taxon>
        <taxon>Sulfolobales</taxon>
        <taxon>Sulfolobaceae</taxon>
        <taxon>Sulfolobus</taxon>
    </lineage>
</organism>
<reference key="1">
    <citation type="journal article" date="1995" name="Proc. Natl. Acad. Sci. U.S.A.">
        <title>Transcription in archaea: similarity to that in eucarya.</title>
        <authorList>
            <person name="Langer D."/>
            <person name="Hain J."/>
            <person name="Thuriaux P."/>
            <person name="Zillig W."/>
        </authorList>
    </citation>
    <scope>NUCLEOTIDE SEQUENCE [GENOMIC DNA]</scope>
    <source>
        <strain>ATCC 33909 / DSM 639 / JCM 8929 / NBRC 15157 / NCIMB 11770</strain>
    </source>
</reference>
<reference key="2">
    <citation type="journal article" date="2005" name="J. Bacteriol.">
        <title>The genome of Sulfolobus acidocaldarius, a model organism of the Crenarchaeota.</title>
        <authorList>
            <person name="Chen L."/>
            <person name="Bruegger K."/>
            <person name="Skovgaard M."/>
            <person name="Redder P."/>
            <person name="She Q."/>
            <person name="Torarinsson E."/>
            <person name="Greve B."/>
            <person name="Awayez M."/>
            <person name="Zibat A."/>
            <person name="Klenk H.-P."/>
            <person name="Garrett R.A."/>
        </authorList>
    </citation>
    <scope>NUCLEOTIDE SEQUENCE [LARGE SCALE GENOMIC DNA]</scope>
    <source>
        <strain>ATCC 33909 / DSM 639 / JCM 8929 / NBRC 15157 / NCIMB 11770</strain>
    </source>
</reference>
<evidence type="ECO:0000255" key="1">
    <source>
        <dbReference type="HAMAP-Rule" id="MF_01310"/>
    </source>
</evidence>
<evidence type="ECO:0000305" key="2"/>
<gene>
    <name evidence="1" type="primary">rps11</name>
    <name type="ordered locus">Saci_0082</name>
</gene>
<sequence length="132" mass="14091">MSSRREIRWGNARIYASQNNTIITITDITGAEIISKASGGMVVKADREKPSPYAAMLAANKAANDAFDKGISAIHIKVRAQGGYGSKTPGPGAQPAIRALARAGFIIGRIEDVTPLPHDTIRRPGGRRGRRV</sequence>
<protein>
    <recommendedName>
        <fullName evidence="1">Small ribosomal subunit protein uS11</fullName>
    </recommendedName>
    <alternativeName>
        <fullName evidence="2">30S ribosomal protein S11</fullName>
    </alternativeName>
</protein>